<proteinExistence type="evidence at protein level"/>
<accession>P0DXJ5</accession>
<evidence type="ECO:0000250" key="1">
    <source>
        <dbReference type="UniProtKB" id="Q00017"/>
    </source>
</evidence>
<evidence type="ECO:0000250" key="2">
    <source>
        <dbReference type="UniProtKB" id="Q3MKY2"/>
    </source>
</evidence>
<evidence type="ECO:0000255" key="3"/>
<evidence type="ECO:0000255" key="4">
    <source>
        <dbReference type="PROSITE-ProRule" id="PRU00498"/>
    </source>
</evidence>
<evidence type="ECO:0000269" key="5">
    <source>
    </source>
</evidence>
<evidence type="ECO:0000303" key="6">
    <source>
    </source>
</evidence>
<evidence type="ECO:0000305" key="7"/>
<keyword id="KW-0017">Alkaloid metabolism</keyword>
<keyword id="KW-0325">Glycoprotein</keyword>
<keyword id="KW-0378">Hydrolase</keyword>
<keyword id="KW-0732">Signal</keyword>
<comment type="function">
    <text evidence="2 5">Acetylesterase involved in the biosynthesis of ajmaline-type monoterpenoid indole alkaloids (MIAs) natural products, important plant-derived pharmaceuticals used in the therapy of heart disorders (PubMed:38212296). Deacetylates 17-O-acetylnorajmaline to produce norajmaline (PubMed:38212296). May also catalyze the conversion of 17-O-acetylajmaline to ajmaline (By similarity).</text>
</comment>
<comment type="catalytic activity">
    <reaction evidence="5">
        <text>17-O-acetylnorajmaline + H2O = norajmaline + acetate + H(+)</text>
        <dbReference type="Rhea" id="RHEA:23796"/>
        <dbReference type="ChEBI" id="CHEBI:15377"/>
        <dbReference type="ChEBI" id="CHEBI:15378"/>
        <dbReference type="ChEBI" id="CHEBI:30089"/>
        <dbReference type="ChEBI" id="CHEBI:77618"/>
        <dbReference type="ChEBI" id="CHEBI:77725"/>
        <dbReference type="EC" id="3.1.1.80"/>
    </reaction>
    <physiologicalReaction direction="left-to-right" evidence="5">
        <dbReference type="Rhea" id="RHEA:23797"/>
    </physiologicalReaction>
</comment>
<comment type="catalytic activity">
    <reaction evidence="2">
        <text>17-O-acetylajmaline + H2O = ajmaline + acetate + H(+)</text>
        <dbReference type="Rhea" id="RHEA:22124"/>
        <dbReference type="ChEBI" id="CHEBI:15377"/>
        <dbReference type="ChEBI" id="CHEBI:15378"/>
        <dbReference type="ChEBI" id="CHEBI:30089"/>
        <dbReference type="ChEBI" id="CHEBI:58567"/>
        <dbReference type="ChEBI" id="CHEBI:58679"/>
        <dbReference type="EC" id="3.1.1.80"/>
    </reaction>
    <physiologicalReaction direction="left-to-right" evidence="2">
        <dbReference type="Rhea" id="RHEA:22125"/>
    </physiologicalReaction>
</comment>
<comment type="pathway">
    <text evidence="5">Alkaloid biosynthesis; ajmaline biosynthesis.</text>
</comment>
<comment type="tissue specificity">
    <text evidence="5">Confined to roots.</text>
</comment>
<comment type="biotechnology">
    <text evidence="5">The strictosidine aglycone-producing AJM7-DeltaHYS yeast strain expressing pathway genes of the VOM module, RsGS, SBE (GsSBE, RsSBE1 or RsSBE2), RsPNAE, RsVS and RsVH, accumulates vomilenine (PubMed:38212296). Additionnal expression of pathway genes of the AJM module, RsVR, RsDHVR, AAE (RsAAE1 or RsAAE2) and RsNNMT, leads to the production of ajmaline (PubMed:38212296). Ajmaline is an anti-arrhythmic alkaloid commercially used as an efficient drug for the treatment of arrhythmic heart disorder (PubMed:38212296).</text>
</comment>
<comment type="similarity">
    <text evidence="7">Belongs to the 'GDSL' lipolytic enzyme family.</text>
</comment>
<name>AAE2_RAUSE</name>
<feature type="signal peptide" evidence="3">
    <location>
        <begin position="1"/>
        <end position="23"/>
    </location>
</feature>
<feature type="chain" id="PRO_0000462319" description="Acetylajmalan esterase 2">
    <location>
        <begin position="24"/>
        <end position="362"/>
    </location>
</feature>
<feature type="active site" description="Nucleophile" evidence="1">
    <location>
        <position position="38"/>
    </location>
</feature>
<feature type="active site" evidence="1">
    <location>
        <position position="335"/>
    </location>
</feature>
<feature type="active site" evidence="1">
    <location>
        <position position="338"/>
    </location>
</feature>
<feature type="glycosylation site" description="N-linked (GlcNAc...) asparagine" evidence="4">
    <location>
        <position position="100"/>
    </location>
</feature>
<feature type="glycosylation site" description="N-linked (GlcNAc...) asparagine" evidence="4">
    <location>
        <position position="118"/>
    </location>
</feature>
<feature type="glycosylation site" description="N-linked (GlcNAc...) asparagine" evidence="4">
    <location>
        <position position="151"/>
    </location>
</feature>
<feature type="glycosylation site" description="N-linked (GlcNAc...) asparagine" evidence="4">
    <location>
        <position position="202"/>
    </location>
</feature>
<dbReference type="EC" id="3.1.1.80" evidence="5"/>
<dbReference type="EMBL" id="OR088065">
    <property type="protein sequence ID" value="WKU61930.1"/>
    <property type="molecule type" value="mRNA"/>
</dbReference>
<dbReference type="UniPathway" id="UPA00310"/>
<protein>
    <recommendedName>
        <fullName evidence="6">Acetylajmalan esterase 2</fullName>
        <shortName evidence="6">RsAAE2</shortName>
        <ecNumber evidence="5">3.1.1.80</ecNumber>
    </recommendedName>
</protein>
<gene>
    <name evidence="6" type="primary">AAE2</name>
</gene>
<reference key="1">
    <citation type="journal article" date="2024" name="Nat. Commun.">
        <title>De novo biosynthesis of antiarrhythmic alkaloid ajmaline.</title>
        <authorList>
            <person name="Guo J."/>
            <person name="Gao D."/>
            <person name="Lian J."/>
            <person name="Qu Y."/>
        </authorList>
    </citation>
    <scope>NUCLEOTIDE SEQUENCE [MRNA]</scope>
    <scope>FUNCTION</scope>
    <scope>CATALYTIC ACTIVITY</scope>
    <scope>PATHWAY</scope>
    <scope>TISSUE SPECIFICITY</scope>
    <scope>BIOTECHNOLOGY</scope>
</reference>
<organism>
    <name type="scientific">Rauvolfia serpentina</name>
    <name type="common">Serpentine wood</name>
    <name type="synonym">Ophioxylon serpentinum</name>
    <dbReference type="NCBI Taxonomy" id="4060"/>
    <lineage>
        <taxon>Eukaryota</taxon>
        <taxon>Viridiplantae</taxon>
        <taxon>Streptophyta</taxon>
        <taxon>Embryophyta</taxon>
        <taxon>Tracheophyta</taxon>
        <taxon>Spermatophyta</taxon>
        <taxon>Magnoliopsida</taxon>
        <taxon>eudicotyledons</taxon>
        <taxon>Gunneridae</taxon>
        <taxon>Pentapetalae</taxon>
        <taxon>asterids</taxon>
        <taxon>lamiids</taxon>
        <taxon>Gentianales</taxon>
        <taxon>Apocynaceae</taxon>
        <taxon>Rauvolfioideae</taxon>
        <taxon>Vinceae</taxon>
        <taxon>Rauvolfiinae</taxon>
        <taxon>Rauvolfia</taxon>
    </lineage>
</organism>
<sequence length="362" mass="40097">MGFAARPFHIVFSLFVLAGATQALIICPFDSIYQFGDSISDTGNYIRILPNGPAAAAANFPYGITFPGIPTGRFSDGRLIVDFIARVLGLPLLNPYLQQNASFKNGVNFAVGGATALNSSVLAAAGVQIPDIYLIPLSTQLNWFQTYLRSNCSSPTECSKKVQNSLFLIGNIGNNDVNYALPYRTIQEIEAYVPSIAKAVANATREIIRLGGRRIIVPGTFPFGCLPRNLYLFPNGDKDDLGCLRRLNDLSIYFNNLFQQALNSLRIEFPQAVIIYADYYNAFRFLLRNARALGFTSTLQSCCGIGGPYNFDLNRLCGFPGVPVCRNPREYIQWDGFHYTEAAHRHIVQYLIPDILKELKCS</sequence>